<organism>
    <name type="scientific">Bacillus anthracis (strain A0248)</name>
    <dbReference type="NCBI Taxonomy" id="592021"/>
    <lineage>
        <taxon>Bacteria</taxon>
        <taxon>Bacillati</taxon>
        <taxon>Bacillota</taxon>
        <taxon>Bacilli</taxon>
        <taxon>Bacillales</taxon>
        <taxon>Bacillaceae</taxon>
        <taxon>Bacillus</taxon>
        <taxon>Bacillus cereus group</taxon>
    </lineage>
</organism>
<name>ATPE_BACAA</name>
<accession>C3P1F3</accession>
<proteinExistence type="inferred from homology"/>
<gene>
    <name evidence="1" type="primary">atpC</name>
    <name type="ordered locus">BAA_5574</name>
</gene>
<feature type="chain" id="PRO_1000146308" description="ATP synthase epsilon chain">
    <location>
        <begin position="1"/>
        <end position="133"/>
    </location>
</feature>
<comment type="function">
    <text evidence="1">Produces ATP from ADP in the presence of a proton gradient across the membrane.</text>
</comment>
<comment type="subunit">
    <text evidence="1">F-type ATPases have 2 components, CF(1) - the catalytic core - and CF(0) - the membrane proton channel. CF(1) has five subunits: alpha(3), beta(3), gamma(1), delta(1), epsilon(1). CF(0) has three main subunits: a, b and c.</text>
</comment>
<comment type="subcellular location">
    <subcellularLocation>
        <location evidence="1">Cell membrane</location>
        <topology evidence="1">Peripheral membrane protein</topology>
    </subcellularLocation>
</comment>
<comment type="similarity">
    <text evidence="1">Belongs to the ATPase epsilon chain family.</text>
</comment>
<reference key="1">
    <citation type="submission" date="2009-04" db="EMBL/GenBank/DDBJ databases">
        <title>Genome sequence of Bacillus anthracis A0248.</title>
        <authorList>
            <person name="Dodson R.J."/>
            <person name="Munk A.C."/>
            <person name="Bruce D."/>
            <person name="Detter C."/>
            <person name="Tapia R."/>
            <person name="Sutton G."/>
            <person name="Sims D."/>
            <person name="Brettin T."/>
        </authorList>
    </citation>
    <scope>NUCLEOTIDE SEQUENCE [LARGE SCALE GENOMIC DNA]</scope>
    <source>
        <strain>A0248</strain>
    </source>
</reference>
<keyword id="KW-0066">ATP synthesis</keyword>
<keyword id="KW-1003">Cell membrane</keyword>
<keyword id="KW-0139">CF(1)</keyword>
<keyword id="KW-0375">Hydrogen ion transport</keyword>
<keyword id="KW-0406">Ion transport</keyword>
<keyword id="KW-0472">Membrane</keyword>
<keyword id="KW-0813">Transport</keyword>
<protein>
    <recommendedName>
        <fullName evidence="1">ATP synthase epsilon chain</fullName>
    </recommendedName>
    <alternativeName>
        <fullName evidence="1">ATP synthase F1 sector epsilon subunit</fullName>
    </alternativeName>
    <alternativeName>
        <fullName evidence="1">F-ATPase epsilon subunit</fullName>
    </alternativeName>
</protein>
<dbReference type="EMBL" id="CP001598">
    <property type="protein sequence ID" value="ACQ49997.1"/>
    <property type="molecule type" value="Genomic_DNA"/>
</dbReference>
<dbReference type="RefSeq" id="WP_000847214.1">
    <property type="nucleotide sequence ID" value="NC_012659.1"/>
</dbReference>
<dbReference type="SMR" id="C3P1F3"/>
<dbReference type="GeneID" id="64186571"/>
<dbReference type="KEGG" id="bai:BAA_5574"/>
<dbReference type="HOGENOM" id="CLU_084338_1_3_9"/>
<dbReference type="GO" id="GO:0005886">
    <property type="term" value="C:plasma membrane"/>
    <property type="evidence" value="ECO:0007669"/>
    <property type="project" value="UniProtKB-SubCell"/>
</dbReference>
<dbReference type="GO" id="GO:0045259">
    <property type="term" value="C:proton-transporting ATP synthase complex"/>
    <property type="evidence" value="ECO:0007669"/>
    <property type="project" value="UniProtKB-KW"/>
</dbReference>
<dbReference type="GO" id="GO:0005524">
    <property type="term" value="F:ATP binding"/>
    <property type="evidence" value="ECO:0007669"/>
    <property type="project" value="UniProtKB-UniRule"/>
</dbReference>
<dbReference type="GO" id="GO:0046933">
    <property type="term" value="F:proton-transporting ATP synthase activity, rotational mechanism"/>
    <property type="evidence" value="ECO:0007669"/>
    <property type="project" value="UniProtKB-UniRule"/>
</dbReference>
<dbReference type="CDD" id="cd12152">
    <property type="entry name" value="F1-ATPase_delta"/>
    <property type="match status" value="1"/>
</dbReference>
<dbReference type="FunFam" id="1.20.5.440:FF:000001">
    <property type="entry name" value="ATP synthase epsilon chain"/>
    <property type="match status" value="1"/>
</dbReference>
<dbReference type="FunFam" id="2.60.15.10:FF:000001">
    <property type="entry name" value="ATP synthase epsilon chain"/>
    <property type="match status" value="1"/>
</dbReference>
<dbReference type="Gene3D" id="1.20.5.440">
    <property type="entry name" value="ATP synthase delta/epsilon subunit, C-terminal domain"/>
    <property type="match status" value="1"/>
</dbReference>
<dbReference type="Gene3D" id="2.60.15.10">
    <property type="entry name" value="F0F1 ATP synthase delta/epsilon subunit, N-terminal"/>
    <property type="match status" value="1"/>
</dbReference>
<dbReference type="HAMAP" id="MF_00530">
    <property type="entry name" value="ATP_synth_epsil_bac"/>
    <property type="match status" value="1"/>
</dbReference>
<dbReference type="InterPro" id="IPR036794">
    <property type="entry name" value="ATP_F1_dsu/esu_C_sf"/>
</dbReference>
<dbReference type="InterPro" id="IPR001469">
    <property type="entry name" value="ATP_synth_F1_dsu/esu"/>
</dbReference>
<dbReference type="InterPro" id="IPR020546">
    <property type="entry name" value="ATP_synth_F1_dsu/esu_N"/>
</dbReference>
<dbReference type="InterPro" id="IPR020547">
    <property type="entry name" value="ATP_synth_F1_esu_C"/>
</dbReference>
<dbReference type="InterPro" id="IPR036771">
    <property type="entry name" value="ATPsynth_dsu/esu_N"/>
</dbReference>
<dbReference type="NCBIfam" id="TIGR01216">
    <property type="entry name" value="ATP_synt_epsi"/>
    <property type="match status" value="1"/>
</dbReference>
<dbReference type="NCBIfam" id="NF001846">
    <property type="entry name" value="PRK00571.1-3"/>
    <property type="match status" value="1"/>
</dbReference>
<dbReference type="NCBIfam" id="NF009980">
    <property type="entry name" value="PRK13446.1"/>
    <property type="match status" value="1"/>
</dbReference>
<dbReference type="PANTHER" id="PTHR13822">
    <property type="entry name" value="ATP SYNTHASE DELTA/EPSILON CHAIN"/>
    <property type="match status" value="1"/>
</dbReference>
<dbReference type="PANTHER" id="PTHR13822:SF10">
    <property type="entry name" value="ATP SYNTHASE EPSILON CHAIN, CHLOROPLASTIC"/>
    <property type="match status" value="1"/>
</dbReference>
<dbReference type="Pfam" id="PF00401">
    <property type="entry name" value="ATP-synt_DE"/>
    <property type="match status" value="1"/>
</dbReference>
<dbReference type="Pfam" id="PF02823">
    <property type="entry name" value="ATP-synt_DE_N"/>
    <property type="match status" value="1"/>
</dbReference>
<dbReference type="SUPFAM" id="SSF46604">
    <property type="entry name" value="Epsilon subunit of F1F0-ATP synthase C-terminal domain"/>
    <property type="match status" value="1"/>
</dbReference>
<dbReference type="SUPFAM" id="SSF51344">
    <property type="entry name" value="Epsilon subunit of F1F0-ATP synthase N-terminal domain"/>
    <property type="match status" value="1"/>
</dbReference>
<sequence>MKTFPVSIVTPDGPVYEKEVEMVSVKAESGEMGILPGHIPTVAPLKISAVRLKNGGHTDYVAVSGGFIEVRPDKVTVLSSSAEEANHIDIHRANEAKRRAEQRMQDKQAHVDFKRAEMALQRAVNRLNVSDMK</sequence>
<evidence type="ECO:0000255" key="1">
    <source>
        <dbReference type="HAMAP-Rule" id="MF_00530"/>
    </source>
</evidence>